<comment type="function">
    <text evidence="1">Plays a critical role in cytoplasmic virus egress. Participates in the final step of tegumentation and envelope acquisition within the host cytoplasm by directly interacting with the capsid. Upon virion binding to target cell, a signaling cascade is triggered to disrupt the interaction with the capsid, thereby preparing capsid uncoating.</text>
</comment>
<comment type="subunit">
    <text evidence="1">Interacts with cytoplasmic envelopment protein 3 and with the capsid.</text>
</comment>
<comment type="subcellular location">
    <subcellularLocation>
        <location evidence="1">Virion tegument</location>
    </subcellularLocation>
    <subcellularLocation>
        <location evidence="1">Host cytoplasm</location>
    </subcellularLocation>
    <subcellularLocation>
        <location evidence="1">Host nucleus</location>
    </subcellularLocation>
    <text evidence="1">Localizes in the host nucleus up to 18 hours postinfection, but at later times localizes to punctate, cytoplasmic structures.</text>
</comment>
<comment type="similarity">
    <text evidence="1">Belongs to the herpesviridae cytoplasmic envelopment protein 2 family.</text>
</comment>
<accession>O36382</accession>
<organismHost>
    <name type="scientific">Connochaetes taurinus</name>
    <name type="common">Blue wildebeest</name>
    <dbReference type="NCBI Taxonomy" id="9927"/>
</organismHost>
<organism>
    <name type="scientific">Alcelaphine herpesvirus 1 (strain C500)</name>
    <name type="common">AlHV-1</name>
    <name type="synonym">Malignant catarrhal fever virus</name>
    <dbReference type="NCBI Taxonomy" id="654901"/>
    <lineage>
        <taxon>Viruses</taxon>
        <taxon>Duplodnaviria</taxon>
        <taxon>Heunggongvirae</taxon>
        <taxon>Peploviricota</taxon>
        <taxon>Herviviricetes</taxon>
        <taxon>Herpesvirales</taxon>
        <taxon>Orthoherpesviridae</taxon>
        <taxon>Gammaherpesvirinae</taxon>
        <taxon>Macavirus</taxon>
        <taxon>Macavirus alcelaphinegamma1</taxon>
    </lineage>
</organism>
<gene>
    <name type="primary">33</name>
</gene>
<dbReference type="EMBL" id="AF005370">
    <property type="protein sequence ID" value="AAC58079.1"/>
    <property type="molecule type" value="Genomic_DNA"/>
</dbReference>
<dbReference type="PIR" id="T03127">
    <property type="entry name" value="T03127"/>
</dbReference>
<dbReference type="RefSeq" id="NP_065531.1">
    <property type="nucleotide sequence ID" value="NC_002531.1"/>
</dbReference>
<dbReference type="KEGG" id="vg:911796"/>
<dbReference type="Proteomes" id="UP000000941">
    <property type="component" value="Segment"/>
</dbReference>
<dbReference type="GO" id="GO:0030430">
    <property type="term" value="C:host cell cytoplasm"/>
    <property type="evidence" value="ECO:0007669"/>
    <property type="project" value="UniProtKB-SubCell"/>
</dbReference>
<dbReference type="GO" id="GO:0042025">
    <property type="term" value="C:host cell nucleus"/>
    <property type="evidence" value="ECO:0007669"/>
    <property type="project" value="UniProtKB-SubCell"/>
</dbReference>
<dbReference type="GO" id="GO:0019033">
    <property type="term" value="C:viral tegument"/>
    <property type="evidence" value="ECO:0007669"/>
    <property type="project" value="UniProtKB-SubCell"/>
</dbReference>
<dbReference type="HAMAP" id="MF_04039">
    <property type="entry name" value="HSV_CEP2"/>
    <property type="match status" value="1"/>
</dbReference>
<dbReference type="InterPro" id="IPR004286">
    <property type="entry name" value="Herpes_UL16/UL94"/>
</dbReference>
<dbReference type="Pfam" id="PF03044">
    <property type="entry name" value="Herpes_UL16"/>
    <property type="match status" value="1"/>
</dbReference>
<sequence>MGSRERRWLLKHFLNKECLWVKNSASTAVIKVYTSTTARSPLWPGRHAAMPGIEGPINVTVQLMKPKDRKMCATFYVNGVFVDSCTPTAFYCREVQRYGIYLLFFGDLVDPEPPNVIPENIAVHKNEPPVHLTILQMVNSATLLKTPDDLPKPHVEVVPLGPFGPWMANGSLLQYTINPDLLICCPSIGTLPTMSNIITWITKCENEECESCHGNSDHACVLRGVTLADQNYGSDTCPCVAPCSMRHGNIARITTSSNLLGFLFPPESQNDIVAIRAKSNKLTLNVQDIFCGVTREGEEVACLQSPWLLFGLSHLVSRMVMYGCESIKRKCLRSY</sequence>
<protein>
    <recommendedName>
        <fullName evidence="1">Cytoplasmic envelopment protein 2</fullName>
    </recommendedName>
</protein>
<proteinExistence type="inferred from homology"/>
<name>CEP2_ALHV1</name>
<reference key="1">
    <citation type="journal article" date="1997" name="J. Virol.">
        <title>Primary structure of the alcelaphine herpesvirus 1 genome.</title>
        <authorList>
            <person name="Ensser A."/>
            <person name="Pflanz R."/>
            <person name="Fleckenstein B."/>
        </authorList>
    </citation>
    <scope>NUCLEOTIDE SEQUENCE [LARGE SCALE GENOMIC DNA]</scope>
</reference>
<keyword id="KW-1035">Host cytoplasm</keyword>
<keyword id="KW-1048">Host nucleus</keyword>
<keyword id="KW-0426">Late protein</keyword>
<keyword id="KW-1185">Reference proteome</keyword>
<keyword id="KW-0946">Virion</keyword>
<keyword id="KW-0920">Virion tegument</keyword>
<evidence type="ECO:0000255" key="1">
    <source>
        <dbReference type="HAMAP-Rule" id="MF_04039"/>
    </source>
</evidence>
<feature type="chain" id="PRO_0000405741" description="Cytoplasmic envelopment protein 2">
    <location>
        <begin position="1"/>
        <end position="335"/>
    </location>
</feature>